<protein>
    <recommendedName>
        <fullName>Myc proto-oncogene protein</fullName>
        <shortName>c-Myc</shortName>
    </recommendedName>
</protein>
<feature type="chain" id="PRO_0000127313" description="Myc proto-oncogene protein">
    <location>
        <begin position="1"/>
        <end position="435"/>
    </location>
</feature>
<feature type="domain" description="bHLH" evidence="3">
    <location>
        <begin position="350"/>
        <end position="402"/>
    </location>
</feature>
<feature type="region of interest" description="Disordered" evidence="4">
    <location>
        <begin position="163"/>
        <end position="193"/>
    </location>
</feature>
<feature type="region of interest" description="Disordered" evidence="4">
    <location>
        <begin position="222"/>
        <end position="286"/>
    </location>
</feature>
<feature type="region of interest" description="Disordered" evidence="4">
    <location>
        <begin position="335"/>
        <end position="359"/>
    </location>
</feature>
<feature type="region of interest" description="Leucine-zipper">
    <location>
        <begin position="409"/>
        <end position="430"/>
    </location>
</feature>
<feature type="short sequence motif" description="9aaTAD" evidence="2">
    <location>
        <begin position="105"/>
        <end position="113"/>
    </location>
</feature>
<feature type="compositionally biased region" description="Pro residues" evidence="4">
    <location>
        <begin position="175"/>
        <end position="188"/>
    </location>
</feature>
<feature type="compositionally biased region" description="Low complexity" evidence="4">
    <location>
        <begin position="231"/>
        <end position="246"/>
    </location>
</feature>
<feature type="compositionally biased region" description="Acidic residues" evidence="4">
    <location>
        <begin position="247"/>
        <end position="259"/>
    </location>
</feature>
<feature type="compositionally biased region" description="Low complexity" evidence="4">
    <location>
        <begin position="264"/>
        <end position="278"/>
    </location>
</feature>
<feature type="glycosylation site" description="O-linked (GlcNAc) threonine" evidence="1">
    <location>
        <position position="80"/>
    </location>
</feature>
<feature type="splice variant" id="VSP_061786" description="In isoform 1.">
    <location>
        <begin position="1"/>
        <end position="19"/>
    </location>
</feature>
<organism>
    <name type="scientific">Gallus gallus</name>
    <name type="common">Chicken</name>
    <dbReference type="NCBI Taxonomy" id="9031"/>
    <lineage>
        <taxon>Eukaryota</taxon>
        <taxon>Metazoa</taxon>
        <taxon>Chordata</taxon>
        <taxon>Craniata</taxon>
        <taxon>Vertebrata</taxon>
        <taxon>Euteleostomi</taxon>
        <taxon>Archelosauria</taxon>
        <taxon>Archosauria</taxon>
        <taxon>Dinosauria</taxon>
        <taxon>Saurischia</taxon>
        <taxon>Theropoda</taxon>
        <taxon>Coelurosauria</taxon>
        <taxon>Aves</taxon>
        <taxon>Neognathae</taxon>
        <taxon>Galloanserae</taxon>
        <taxon>Galliformes</taxon>
        <taxon>Phasianidae</taxon>
        <taxon>Phasianinae</taxon>
        <taxon>Gallus</taxon>
    </lineage>
</organism>
<comment type="function">
    <text evidence="2">Transcription factor that binds DNA in a non-specific manner, yet also specifically recognizes the core sequence 5'-CAC[GA]TG-3'. Activates the transcription of growth-related genes.</text>
</comment>
<comment type="subunit">
    <text>Efficient DNA binding requires dimerization with another bHLH protein. Binds DNA as a heterodimer with MAX.</text>
</comment>
<comment type="subcellular location">
    <subcellularLocation>
        <location>Nucleus</location>
    </subcellularLocation>
</comment>
<comment type="alternative products">
    <event type="alternative initiation"/>
    <isoform>
        <id>P01109-1</id>
        <name>2</name>
        <name evidence="6">c-myc 1</name>
        <sequence type="displayed"/>
    </isoform>
    <isoform>
        <id>P01109-2</id>
        <name>1</name>
        <name evidence="6">c-myc 2</name>
        <sequence type="described" ref="VSP_061786"/>
    </isoform>
</comment>
<comment type="induction">
    <molecule>Isoform 2</molecule>
    <text evidence="5">Up-regulated in cultured cells by methionine deprivation (at protein level).</text>
</comment>
<comment type="induction">
    <molecule>Isoform 1</molecule>
    <text evidence="5">In cell culture, down-regulated as cells approach high densities (at protein level).</text>
</comment>
<comment type="domain">
    <text evidence="2">The 9aaTAD motif is a transactivation domain present in a large number of yeast and animal transcription factors.</text>
</comment>
<comment type="miscellaneous">
    <molecule>Isoform 2</molecule>
    <text evidence="7">Produced by alternative translation initiation from a ATT codon, which is translated as Met.</text>
</comment>
<comment type="miscellaneous">
    <text evidence="7">Alternative translation initiation from an upstream, in-frame non-ATG (ATT) codon or a downstream ATG start site results in the production of 2 isoforms with distinct N-termini, shown in this entry as isoform 2 and isoform 1, respectively.</text>
</comment>
<reference key="1">
    <citation type="journal article" date="1983" name="Proc. Natl. Acad. Sci. U.S.A.">
        <title>Nucleotide sequence analysis of the chicken c-myc gene reveals homologous and unique coding regions by comparison with the transforming gene of avian myelocytomatosis virus MC29, delta gag-myc.</title>
        <authorList>
            <person name="Watson D.K."/>
            <person name="Reddy E.P."/>
            <person name="Duesberg P.H."/>
            <person name="Papas T.S."/>
        </authorList>
    </citation>
    <scope>NUCLEOTIDE SEQUENCE [GENOMIC DNA]</scope>
</reference>
<reference key="2">
    <citation type="journal article" date="1988" name="Mol. Cell. Biol.">
        <title>Absence of missense mutations in activated c-myc genes in avian leukosis virus-induced B-cell lymphomas.</title>
        <authorList>
            <person name="Hahn M."/>
            <person name="Hayward W."/>
        </authorList>
    </citation>
    <scope>NUCLEOTIDE SEQUENCE [GENOMIC DNA]</scope>
</reference>
<reference key="3">
    <citation type="journal article" date="1984" name="Proc. Natl. Acad. Sci. U.S.A.">
        <title>Nucleotide sequence 5' of the chicken c-myc coding region: localization of a noncoding exon that is absent from myc transcripts in most avian leukosis virus-induced lymphomas.</title>
        <authorList>
            <person name="Shih C.-K."/>
            <person name="Linial M."/>
            <person name="Goodenow M.M."/>
            <person name="Hayward W.S."/>
        </authorList>
    </citation>
    <scope>NUCLEOTIDE SEQUENCE [GENOMIC DNA] OF 20-63</scope>
</reference>
<reference key="4">
    <citation type="journal article" date="1992" name="Genes Dev.">
        <title>Translational activation of the non-AUG-initiated c-myc 1 protein at high cell densities due to methionine deprivation.</title>
        <authorList>
            <person name="Hann S.R."/>
            <person name="Sloan-Brown K."/>
            <person name="Spotts G.D."/>
        </authorList>
    </citation>
    <scope>ALTERNATIVE TRANSLATION INITIATION</scope>
    <scope>INDUCTION BY METHIONINE DEPRIVATION</scope>
</reference>
<sequence>MASLRLAAGALEEPAAAAAMPLSASLPSKNYDYDYDSVQPYFYFEEEEENFYLAAQQRGSELQPPAPSEDIWKKFELLPTPPLSPSRRSSLAAASCFPSTADQLEMVTELLGGDMVNQSFICDPDDESFVKSIIIQDCMWSGFSAAAKLEKVVSEKLATYQASRREGGPAAASRPGPPPSGPPPPPAGPAASAGLYLHDLGAAAADCIDPSVVFPYPLSERAPRAAPPGANPAALLGVDTPPTTSSDSEEEQEEDEEIDVVTLAEANESESSTESSTEASEEHCKPHHSPLVLKRCHVNIHQHNYAAPPSTKVEYPAAKRLKLDSGRVLKQISNNRKCSSPRTSDSEENDKRRTHNVLERQRRNELKLSFFALRDQIPEVANNEKAPKVVILKKATEYVLSIQSDEHRLIAEKEQLRRRREQLKHKLEQLRNSRA</sequence>
<dbReference type="EMBL" id="J00889">
    <property type="protein sequence ID" value="AAA48963.1"/>
    <property type="molecule type" value="Genomic_DNA"/>
</dbReference>
<dbReference type="EMBL" id="M20006">
    <property type="protein sequence ID" value="AAA48700.1"/>
    <property type="molecule type" value="Genomic_DNA"/>
</dbReference>
<dbReference type="PIR" id="A93944">
    <property type="entry name" value="FOCH"/>
</dbReference>
<dbReference type="RefSeq" id="NP_001026123.1">
    <molecule id="P01109-2"/>
    <property type="nucleotide sequence ID" value="NM_001030952.2"/>
</dbReference>
<dbReference type="RefSeq" id="NP_001422717.1">
    <molecule id="P01109-1"/>
    <property type="nucleotide sequence ID" value="NM_001435788.1"/>
</dbReference>
<dbReference type="RefSeq" id="XP_015138575.1">
    <property type="nucleotide sequence ID" value="XM_015283089.1"/>
</dbReference>
<dbReference type="SMR" id="P01109"/>
<dbReference type="BioGRID" id="681305">
    <property type="interactions" value="2"/>
</dbReference>
<dbReference type="FunCoup" id="P01109">
    <property type="interactions" value="951"/>
</dbReference>
<dbReference type="MINT" id="P01109"/>
<dbReference type="STRING" id="9031.ENSGALP00000072090"/>
<dbReference type="ChEMBL" id="CHEMBL1250349"/>
<dbReference type="GlyCosmos" id="P01109">
    <property type="glycosylation" value="1 site, No reported glycans"/>
</dbReference>
<dbReference type="GlyGen" id="P01109">
    <property type="glycosylation" value="1 site"/>
</dbReference>
<dbReference type="PaxDb" id="9031-ENSGALP00000026259"/>
<dbReference type="Ensembl" id="ENSGALT00010019032.1">
    <molecule id="P01109-2"/>
    <property type="protein sequence ID" value="ENSGALP00010010581.1"/>
    <property type="gene ID" value="ENSGALG00010007986.1"/>
</dbReference>
<dbReference type="GeneID" id="420332"/>
<dbReference type="KEGG" id="gga:420332"/>
<dbReference type="CTD" id="4609"/>
<dbReference type="VEuPathDB" id="HostDB:geneid_420332"/>
<dbReference type="eggNOG" id="KOG2483">
    <property type="taxonomic scope" value="Eukaryota"/>
</dbReference>
<dbReference type="GeneTree" id="ENSGT00940000155285"/>
<dbReference type="HOGENOM" id="CLU_052560_0_0_1"/>
<dbReference type="InParanoid" id="P01109"/>
<dbReference type="OMA" id="FPYPLHD"/>
<dbReference type="OrthoDB" id="5964374at2759"/>
<dbReference type="PhylomeDB" id="P01109"/>
<dbReference type="TreeFam" id="TF106001"/>
<dbReference type="Reactome" id="R-GGA-5689880">
    <property type="pathway name" value="Ub-specific processing proteases"/>
</dbReference>
<dbReference type="Reactome" id="R-GGA-8866911">
    <property type="pathway name" value="TFAP2 (AP-2) family regulates transcription of cell cycle factors"/>
</dbReference>
<dbReference type="PRO" id="PR:P01109"/>
<dbReference type="Proteomes" id="UP000000539">
    <property type="component" value="Chromosome 2"/>
</dbReference>
<dbReference type="Bgee" id="ENSGALG00000033631">
    <property type="expression patterns" value="Expressed in granulocyte and 11 other cell types or tissues"/>
</dbReference>
<dbReference type="GO" id="GO:0000785">
    <property type="term" value="C:chromatin"/>
    <property type="evidence" value="ECO:0007669"/>
    <property type="project" value="Ensembl"/>
</dbReference>
<dbReference type="GO" id="GO:0071943">
    <property type="term" value="C:Myc-Max complex"/>
    <property type="evidence" value="ECO:0007669"/>
    <property type="project" value="Ensembl"/>
</dbReference>
<dbReference type="GO" id="GO:0005730">
    <property type="term" value="C:nucleolus"/>
    <property type="evidence" value="ECO:0007669"/>
    <property type="project" value="Ensembl"/>
</dbReference>
<dbReference type="GO" id="GO:0005654">
    <property type="term" value="C:nucleoplasm"/>
    <property type="evidence" value="ECO:0007669"/>
    <property type="project" value="Ensembl"/>
</dbReference>
<dbReference type="GO" id="GO:0090571">
    <property type="term" value="C:RNA polymerase II transcription repressor complex"/>
    <property type="evidence" value="ECO:0007669"/>
    <property type="project" value="Ensembl"/>
</dbReference>
<dbReference type="GO" id="GO:0001046">
    <property type="term" value="F:core promoter sequence-specific DNA binding"/>
    <property type="evidence" value="ECO:0007669"/>
    <property type="project" value="Ensembl"/>
</dbReference>
<dbReference type="GO" id="GO:0001228">
    <property type="term" value="F:DNA-binding transcription activator activity, RNA polymerase II-specific"/>
    <property type="evidence" value="ECO:0007669"/>
    <property type="project" value="Ensembl"/>
</dbReference>
<dbReference type="GO" id="GO:0000981">
    <property type="term" value="F:DNA-binding transcription factor activity, RNA polymerase II-specific"/>
    <property type="evidence" value="ECO:0000250"/>
    <property type="project" value="UniProtKB"/>
</dbReference>
<dbReference type="GO" id="GO:0140297">
    <property type="term" value="F:DNA-binding transcription factor binding"/>
    <property type="evidence" value="ECO:0007669"/>
    <property type="project" value="Ensembl"/>
</dbReference>
<dbReference type="GO" id="GO:0001227">
    <property type="term" value="F:DNA-binding transcription repressor activity, RNA polymerase II-specific"/>
    <property type="evidence" value="ECO:0007669"/>
    <property type="project" value="Ensembl"/>
</dbReference>
<dbReference type="GO" id="GO:0070888">
    <property type="term" value="F:E-box binding"/>
    <property type="evidence" value="ECO:0007669"/>
    <property type="project" value="Ensembl"/>
</dbReference>
<dbReference type="GO" id="GO:0042802">
    <property type="term" value="F:identical protein binding"/>
    <property type="evidence" value="ECO:0007669"/>
    <property type="project" value="Ensembl"/>
</dbReference>
<dbReference type="GO" id="GO:0046983">
    <property type="term" value="F:protein dimerization activity"/>
    <property type="evidence" value="ECO:0007669"/>
    <property type="project" value="InterPro"/>
</dbReference>
<dbReference type="GO" id="GO:0000978">
    <property type="term" value="F:RNA polymerase II cis-regulatory region sequence-specific DNA binding"/>
    <property type="evidence" value="ECO:0000318"/>
    <property type="project" value="GO_Central"/>
</dbReference>
<dbReference type="GO" id="GO:1905761">
    <property type="term" value="F:SCF ubiquitin ligase complex binding"/>
    <property type="evidence" value="ECO:0007669"/>
    <property type="project" value="Ensembl"/>
</dbReference>
<dbReference type="GO" id="GO:0001221">
    <property type="term" value="F:transcription coregulator binding"/>
    <property type="evidence" value="ECO:0007669"/>
    <property type="project" value="Ensembl"/>
</dbReference>
<dbReference type="GO" id="GO:0140537">
    <property type="term" value="F:transcription regulator activator activity"/>
    <property type="evidence" value="ECO:0007669"/>
    <property type="project" value="Ensembl"/>
</dbReference>
<dbReference type="GO" id="GO:0071456">
    <property type="term" value="P:cellular response to hypoxia"/>
    <property type="evidence" value="ECO:0007669"/>
    <property type="project" value="Ensembl"/>
</dbReference>
<dbReference type="GO" id="GO:0034644">
    <property type="term" value="P:cellular response to UV"/>
    <property type="evidence" value="ECO:0007669"/>
    <property type="project" value="Ensembl"/>
</dbReference>
<dbReference type="GO" id="GO:0071466">
    <property type="term" value="P:cellular response to xenobiotic stimulus"/>
    <property type="evidence" value="ECO:0007669"/>
    <property type="project" value="Ensembl"/>
</dbReference>
<dbReference type="GO" id="GO:0051276">
    <property type="term" value="P:chromosome organization"/>
    <property type="evidence" value="ECO:0007669"/>
    <property type="project" value="Ensembl"/>
</dbReference>
<dbReference type="GO" id="GO:0006974">
    <property type="term" value="P:DNA damage response"/>
    <property type="evidence" value="ECO:0007669"/>
    <property type="project" value="Ensembl"/>
</dbReference>
<dbReference type="GO" id="GO:0048730">
    <property type="term" value="P:epidermis morphogenesis"/>
    <property type="evidence" value="ECO:0000270"/>
    <property type="project" value="AgBase"/>
</dbReference>
<dbReference type="GO" id="GO:0070371">
    <property type="term" value="P:ERK1 and ERK2 cascade"/>
    <property type="evidence" value="ECO:0007669"/>
    <property type="project" value="Ensembl"/>
</dbReference>
<dbReference type="GO" id="GO:0000082">
    <property type="term" value="P:G1/S transition of mitotic cell cycle"/>
    <property type="evidence" value="ECO:0007669"/>
    <property type="project" value="Ensembl"/>
</dbReference>
<dbReference type="GO" id="GO:0006879">
    <property type="term" value="P:intracellular iron ion homeostasis"/>
    <property type="evidence" value="ECO:0007669"/>
    <property type="project" value="Ensembl"/>
</dbReference>
<dbReference type="GO" id="GO:0051782">
    <property type="term" value="P:negative regulation of cell division"/>
    <property type="evidence" value="ECO:0007669"/>
    <property type="project" value="Ensembl"/>
</dbReference>
<dbReference type="GO" id="GO:0048147">
    <property type="term" value="P:negative regulation of fibroblast proliferation"/>
    <property type="evidence" value="ECO:0007669"/>
    <property type="project" value="Ensembl"/>
</dbReference>
<dbReference type="GO" id="GO:0044027">
    <property type="term" value="P:negative regulation of gene expression via chromosomal CpG island methylation"/>
    <property type="evidence" value="ECO:0007669"/>
    <property type="project" value="Ensembl"/>
</dbReference>
<dbReference type="GO" id="GO:0045656">
    <property type="term" value="P:negative regulation of monocyte differentiation"/>
    <property type="evidence" value="ECO:0007669"/>
    <property type="project" value="Ensembl"/>
</dbReference>
<dbReference type="GO" id="GO:0060633">
    <property type="term" value="P:negative regulation of transcription initiation by RNA polymerase II"/>
    <property type="evidence" value="ECO:0007669"/>
    <property type="project" value="Ensembl"/>
</dbReference>
<dbReference type="GO" id="GO:0008284">
    <property type="term" value="P:positive regulation of cell population proliferation"/>
    <property type="evidence" value="ECO:0000318"/>
    <property type="project" value="GO_Central"/>
</dbReference>
<dbReference type="GO" id="GO:0050679">
    <property type="term" value="P:positive regulation of epithelial cell proliferation"/>
    <property type="evidence" value="ECO:0007669"/>
    <property type="project" value="Ensembl"/>
</dbReference>
<dbReference type="GO" id="GO:0048146">
    <property type="term" value="P:positive regulation of fibroblast proliferation"/>
    <property type="evidence" value="ECO:0007669"/>
    <property type="project" value="Ensembl"/>
</dbReference>
<dbReference type="GO" id="GO:0010628">
    <property type="term" value="P:positive regulation of gene expression"/>
    <property type="evidence" value="ECO:0007669"/>
    <property type="project" value="Ensembl"/>
</dbReference>
<dbReference type="GO" id="GO:1902255">
    <property type="term" value="P:positive regulation of intrinsic apoptotic signaling pathway by p53 class mediator"/>
    <property type="evidence" value="ECO:0007669"/>
    <property type="project" value="Ensembl"/>
</dbReference>
<dbReference type="GO" id="GO:1902895">
    <property type="term" value="P:positive regulation of miRNA transcription"/>
    <property type="evidence" value="ECO:0007669"/>
    <property type="project" value="Ensembl"/>
</dbReference>
<dbReference type="GO" id="GO:0032986">
    <property type="term" value="P:protein-DNA complex disassembly"/>
    <property type="evidence" value="ECO:0007669"/>
    <property type="project" value="Ensembl"/>
</dbReference>
<dbReference type="GO" id="GO:0010564">
    <property type="term" value="P:regulation of cell cycle process"/>
    <property type="evidence" value="ECO:0007669"/>
    <property type="project" value="Ensembl"/>
</dbReference>
<dbReference type="GO" id="GO:0032204">
    <property type="term" value="P:regulation of telomere maintenance"/>
    <property type="evidence" value="ECO:0007669"/>
    <property type="project" value="Ensembl"/>
</dbReference>
<dbReference type="GO" id="GO:0006357">
    <property type="term" value="P:regulation of transcription by RNA polymerase II"/>
    <property type="evidence" value="ECO:0000318"/>
    <property type="project" value="GO_Central"/>
</dbReference>
<dbReference type="GO" id="GO:0016072">
    <property type="term" value="P:rRNA metabolic process"/>
    <property type="evidence" value="ECO:0007669"/>
    <property type="project" value="Ensembl"/>
</dbReference>
<dbReference type="CDD" id="cd11458">
    <property type="entry name" value="bHLHzip_c-Myc"/>
    <property type="match status" value="1"/>
</dbReference>
<dbReference type="FunFam" id="4.10.280.10:FF:000019">
    <property type="entry name" value="Myc proto-oncogene protein"/>
    <property type="match status" value="1"/>
</dbReference>
<dbReference type="Gene3D" id="4.10.280.10">
    <property type="entry name" value="Helix-loop-helix DNA-binding domain"/>
    <property type="match status" value="1"/>
</dbReference>
<dbReference type="InterPro" id="IPR011598">
    <property type="entry name" value="bHLH_dom"/>
</dbReference>
<dbReference type="InterPro" id="IPR036638">
    <property type="entry name" value="HLH_DNA-bd_sf"/>
</dbReference>
<dbReference type="InterPro" id="IPR003327">
    <property type="entry name" value="Myc-LZ"/>
</dbReference>
<dbReference type="InterPro" id="IPR050433">
    <property type="entry name" value="Myc_transcription_factors"/>
</dbReference>
<dbReference type="InterPro" id="IPR002418">
    <property type="entry name" value="Tscrpt_reg_Myc"/>
</dbReference>
<dbReference type="InterPro" id="IPR012682">
    <property type="entry name" value="Tscrpt_reg_Myc_N"/>
</dbReference>
<dbReference type="PANTHER" id="PTHR45851">
    <property type="entry name" value="MYC PROTO-ONCOGENE"/>
    <property type="match status" value="1"/>
</dbReference>
<dbReference type="Pfam" id="PF00010">
    <property type="entry name" value="HLH"/>
    <property type="match status" value="1"/>
</dbReference>
<dbReference type="Pfam" id="PF02344">
    <property type="entry name" value="Myc-LZ"/>
    <property type="match status" value="1"/>
</dbReference>
<dbReference type="Pfam" id="PF01056">
    <property type="entry name" value="Myc_N"/>
    <property type="match status" value="1"/>
</dbReference>
<dbReference type="PIRSF" id="PIRSF001705">
    <property type="entry name" value="Myc_protein"/>
    <property type="match status" value="1"/>
</dbReference>
<dbReference type="PRINTS" id="PR00044">
    <property type="entry name" value="LEUZIPPRMYC"/>
</dbReference>
<dbReference type="SMART" id="SM00353">
    <property type="entry name" value="HLH"/>
    <property type="match status" value="1"/>
</dbReference>
<dbReference type="SUPFAM" id="SSF47459">
    <property type="entry name" value="HLH, helix-loop-helix DNA-binding domain"/>
    <property type="match status" value="1"/>
</dbReference>
<dbReference type="PROSITE" id="PS50888">
    <property type="entry name" value="BHLH"/>
    <property type="match status" value="1"/>
</dbReference>
<keyword id="KW-0010">Activator</keyword>
<keyword id="KW-0024">Alternative initiation</keyword>
<keyword id="KW-0238">DNA-binding</keyword>
<keyword id="KW-0325">Glycoprotein</keyword>
<keyword id="KW-0539">Nucleus</keyword>
<keyword id="KW-0597">Phosphoprotein</keyword>
<keyword id="KW-0656">Proto-oncogene</keyword>
<keyword id="KW-1185">Reference proteome</keyword>
<keyword id="KW-0804">Transcription</keyword>
<keyword id="KW-0805">Transcription regulation</keyword>
<accession>P01109</accession>
<proteinExistence type="evidence at protein level"/>
<evidence type="ECO:0000250" key="1"/>
<evidence type="ECO:0000250" key="2">
    <source>
        <dbReference type="UniProtKB" id="P01106"/>
    </source>
</evidence>
<evidence type="ECO:0000255" key="3">
    <source>
        <dbReference type="PROSITE-ProRule" id="PRU00981"/>
    </source>
</evidence>
<evidence type="ECO:0000256" key="4">
    <source>
        <dbReference type="SAM" id="MobiDB-lite"/>
    </source>
</evidence>
<evidence type="ECO:0000269" key="5">
    <source>
    </source>
</evidence>
<evidence type="ECO:0000303" key="6">
    <source>
    </source>
</evidence>
<evidence type="ECO:0000305" key="7">
    <source>
    </source>
</evidence>
<name>MYC_CHICK</name>
<gene>
    <name type="primary">MYC</name>
</gene>